<organism>
    <name type="scientific">Shewanella woodyi (strain ATCC 51908 / MS32)</name>
    <dbReference type="NCBI Taxonomy" id="392500"/>
    <lineage>
        <taxon>Bacteria</taxon>
        <taxon>Pseudomonadati</taxon>
        <taxon>Pseudomonadota</taxon>
        <taxon>Gammaproteobacteria</taxon>
        <taxon>Alteromonadales</taxon>
        <taxon>Shewanellaceae</taxon>
        <taxon>Shewanella</taxon>
    </lineage>
</organism>
<evidence type="ECO:0000255" key="1">
    <source>
        <dbReference type="HAMAP-Rule" id="MF_00719"/>
    </source>
</evidence>
<protein>
    <recommendedName>
        <fullName evidence="1">Adenosylcobinamide-GDP ribazoletransferase</fullName>
        <ecNumber evidence="1">2.7.8.26</ecNumber>
    </recommendedName>
    <alternativeName>
        <fullName evidence="1">Cobalamin synthase</fullName>
    </alternativeName>
    <alternativeName>
        <fullName evidence="1">Cobalamin-5'-phosphate synthase</fullName>
    </alternativeName>
</protein>
<accession>B1KH27</accession>
<sequence>MHVLRQQLTLFFIAMGFFTRIPMPTWVKVDGESLNKANRYFGLIGLLVGGICALVYEITRGFLPVSVSIIFAMIAGLVVTGGFHEDGLADTADGLGGGWSVADKLKIMKDSRIGTYGALALVMGLMLKFILLSELALYNPDLVVTALIVGHTLSRVMAASLIFSQSYVRDDDSSKSKPLAQNQTVNELLILLATAVLVLWCSGLSGGLYIAIGLVLLRWGLIYLFHRQIGGYTGDTLGATQQLAELACYLMLLGFSL</sequence>
<comment type="function">
    <text evidence="1">Joins adenosylcobinamide-GDP and alpha-ribazole to generate adenosylcobalamin (Ado-cobalamin). Also synthesizes adenosylcobalamin 5'-phosphate from adenosylcobinamide-GDP and alpha-ribazole 5'-phosphate.</text>
</comment>
<comment type="catalytic activity">
    <reaction evidence="1">
        <text>alpha-ribazole + adenosylcob(III)inamide-GDP = adenosylcob(III)alamin + GMP + H(+)</text>
        <dbReference type="Rhea" id="RHEA:16049"/>
        <dbReference type="ChEBI" id="CHEBI:10329"/>
        <dbReference type="ChEBI" id="CHEBI:15378"/>
        <dbReference type="ChEBI" id="CHEBI:18408"/>
        <dbReference type="ChEBI" id="CHEBI:58115"/>
        <dbReference type="ChEBI" id="CHEBI:60487"/>
        <dbReference type="EC" id="2.7.8.26"/>
    </reaction>
</comment>
<comment type="catalytic activity">
    <reaction evidence="1">
        <text>alpha-ribazole 5'-phosphate + adenosylcob(III)inamide-GDP = adenosylcob(III)alamin 5'-phosphate + GMP + H(+)</text>
        <dbReference type="Rhea" id="RHEA:23560"/>
        <dbReference type="ChEBI" id="CHEBI:15378"/>
        <dbReference type="ChEBI" id="CHEBI:57918"/>
        <dbReference type="ChEBI" id="CHEBI:58115"/>
        <dbReference type="ChEBI" id="CHEBI:60487"/>
        <dbReference type="ChEBI" id="CHEBI:60493"/>
        <dbReference type="EC" id="2.7.8.26"/>
    </reaction>
</comment>
<comment type="cofactor">
    <cofactor evidence="1">
        <name>Mg(2+)</name>
        <dbReference type="ChEBI" id="CHEBI:18420"/>
    </cofactor>
</comment>
<comment type="pathway">
    <text evidence="1">Cofactor biosynthesis; adenosylcobalamin biosynthesis; adenosylcobalamin from cob(II)yrinate a,c-diamide: step 7/7.</text>
</comment>
<comment type="subcellular location">
    <subcellularLocation>
        <location evidence="1">Cell inner membrane</location>
        <topology evidence="1">Multi-pass membrane protein</topology>
    </subcellularLocation>
</comment>
<comment type="similarity">
    <text evidence="1">Belongs to the CobS family.</text>
</comment>
<feature type="chain" id="PRO_1000189619" description="Adenosylcobinamide-GDP ribazoletransferase">
    <location>
        <begin position="1"/>
        <end position="257"/>
    </location>
</feature>
<feature type="transmembrane region" description="Helical" evidence="1">
    <location>
        <begin position="7"/>
        <end position="27"/>
    </location>
</feature>
<feature type="transmembrane region" description="Helical" evidence="1">
    <location>
        <begin position="39"/>
        <end position="59"/>
    </location>
</feature>
<feature type="transmembrane region" description="Helical" evidence="1">
    <location>
        <begin position="61"/>
        <end position="81"/>
    </location>
</feature>
<feature type="transmembrane region" description="Helical" evidence="1">
    <location>
        <begin position="113"/>
        <end position="133"/>
    </location>
</feature>
<feature type="transmembrane region" description="Helical" evidence="1">
    <location>
        <begin position="143"/>
        <end position="163"/>
    </location>
</feature>
<feature type="transmembrane region" description="Helical" evidence="1">
    <location>
        <begin position="196"/>
        <end position="216"/>
    </location>
</feature>
<name>COBS_SHEWM</name>
<dbReference type="EC" id="2.7.8.26" evidence="1"/>
<dbReference type="EMBL" id="CP000961">
    <property type="protein sequence ID" value="ACA88339.1"/>
    <property type="molecule type" value="Genomic_DNA"/>
</dbReference>
<dbReference type="RefSeq" id="WP_012326668.1">
    <property type="nucleotide sequence ID" value="NC_010506.1"/>
</dbReference>
<dbReference type="SMR" id="B1KH27"/>
<dbReference type="STRING" id="392500.Swoo_4083"/>
<dbReference type="KEGG" id="swd:Swoo_4083"/>
<dbReference type="eggNOG" id="COG0368">
    <property type="taxonomic scope" value="Bacteria"/>
</dbReference>
<dbReference type="HOGENOM" id="CLU_057426_1_1_6"/>
<dbReference type="UniPathway" id="UPA00148">
    <property type="reaction ID" value="UER00238"/>
</dbReference>
<dbReference type="Proteomes" id="UP000002168">
    <property type="component" value="Chromosome"/>
</dbReference>
<dbReference type="GO" id="GO:0005886">
    <property type="term" value="C:plasma membrane"/>
    <property type="evidence" value="ECO:0007669"/>
    <property type="project" value="UniProtKB-SubCell"/>
</dbReference>
<dbReference type="GO" id="GO:0051073">
    <property type="term" value="F:adenosylcobinamide-GDP ribazoletransferase activity"/>
    <property type="evidence" value="ECO:0007669"/>
    <property type="project" value="UniProtKB-UniRule"/>
</dbReference>
<dbReference type="GO" id="GO:0008818">
    <property type="term" value="F:cobalamin 5'-phosphate synthase activity"/>
    <property type="evidence" value="ECO:0007669"/>
    <property type="project" value="UniProtKB-UniRule"/>
</dbReference>
<dbReference type="GO" id="GO:0009236">
    <property type="term" value="P:cobalamin biosynthetic process"/>
    <property type="evidence" value="ECO:0007669"/>
    <property type="project" value="UniProtKB-UniRule"/>
</dbReference>
<dbReference type="HAMAP" id="MF_00719">
    <property type="entry name" value="CobS"/>
    <property type="match status" value="1"/>
</dbReference>
<dbReference type="InterPro" id="IPR003805">
    <property type="entry name" value="CobS"/>
</dbReference>
<dbReference type="NCBIfam" id="TIGR00317">
    <property type="entry name" value="cobS"/>
    <property type="match status" value="1"/>
</dbReference>
<dbReference type="NCBIfam" id="NF001277">
    <property type="entry name" value="PRK00235.1-3"/>
    <property type="match status" value="1"/>
</dbReference>
<dbReference type="PANTHER" id="PTHR34148">
    <property type="entry name" value="ADENOSYLCOBINAMIDE-GDP RIBAZOLETRANSFERASE"/>
    <property type="match status" value="1"/>
</dbReference>
<dbReference type="PANTHER" id="PTHR34148:SF1">
    <property type="entry name" value="ADENOSYLCOBINAMIDE-GDP RIBAZOLETRANSFERASE"/>
    <property type="match status" value="1"/>
</dbReference>
<dbReference type="Pfam" id="PF02654">
    <property type="entry name" value="CobS"/>
    <property type="match status" value="1"/>
</dbReference>
<gene>
    <name evidence="1" type="primary">cobS</name>
    <name type="ordered locus">Swoo_4083</name>
</gene>
<reference key="1">
    <citation type="submission" date="2008-02" db="EMBL/GenBank/DDBJ databases">
        <title>Complete sequence of Shewanella woodyi ATCC 51908.</title>
        <authorList>
            <consortium name="US DOE Joint Genome Institute"/>
            <person name="Copeland A."/>
            <person name="Lucas S."/>
            <person name="Lapidus A."/>
            <person name="Glavina del Rio T."/>
            <person name="Dalin E."/>
            <person name="Tice H."/>
            <person name="Bruce D."/>
            <person name="Goodwin L."/>
            <person name="Pitluck S."/>
            <person name="Sims D."/>
            <person name="Brettin T."/>
            <person name="Detter J.C."/>
            <person name="Han C."/>
            <person name="Kuske C.R."/>
            <person name="Schmutz J."/>
            <person name="Larimer F."/>
            <person name="Land M."/>
            <person name="Hauser L."/>
            <person name="Kyrpides N."/>
            <person name="Lykidis A."/>
            <person name="Zhao J.-S."/>
            <person name="Richardson P."/>
        </authorList>
    </citation>
    <scope>NUCLEOTIDE SEQUENCE [LARGE SCALE GENOMIC DNA]</scope>
    <source>
        <strain>ATCC 51908 / MS32</strain>
    </source>
</reference>
<proteinExistence type="inferred from homology"/>
<keyword id="KW-0997">Cell inner membrane</keyword>
<keyword id="KW-1003">Cell membrane</keyword>
<keyword id="KW-0169">Cobalamin biosynthesis</keyword>
<keyword id="KW-0460">Magnesium</keyword>
<keyword id="KW-0472">Membrane</keyword>
<keyword id="KW-1185">Reference proteome</keyword>
<keyword id="KW-0808">Transferase</keyword>
<keyword id="KW-0812">Transmembrane</keyword>
<keyword id="KW-1133">Transmembrane helix</keyword>